<comment type="function">
    <text evidence="1">Required for formate dehydrogenase (FDH) activity. Acts as a sulfur carrier protein that transfers sulfur from IscS to the molybdenum cofactor prior to its insertion into FDH.</text>
</comment>
<comment type="subcellular location">
    <subcellularLocation>
        <location evidence="1">Cytoplasm</location>
    </subcellularLocation>
</comment>
<comment type="similarity">
    <text evidence="1">Belongs to the FdhD family.</text>
</comment>
<organism>
    <name type="scientific">Shigella boydii serotype 4 (strain Sb227)</name>
    <dbReference type="NCBI Taxonomy" id="300268"/>
    <lineage>
        <taxon>Bacteria</taxon>
        <taxon>Pseudomonadati</taxon>
        <taxon>Pseudomonadota</taxon>
        <taxon>Gammaproteobacteria</taxon>
        <taxon>Enterobacterales</taxon>
        <taxon>Enterobacteriaceae</taxon>
        <taxon>Shigella</taxon>
    </lineage>
</organism>
<proteinExistence type="inferred from homology"/>
<dbReference type="EMBL" id="CP000036">
    <property type="protein sequence ID" value="ABB68360.1"/>
    <property type="molecule type" value="Genomic_DNA"/>
</dbReference>
<dbReference type="RefSeq" id="WP_000753617.1">
    <property type="nucleotide sequence ID" value="NC_007613.1"/>
</dbReference>
<dbReference type="SMR" id="Q31U98"/>
<dbReference type="GeneID" id="93778043"/>
<dbReference type="KEGG" id="sbo:SBO_3909"/>
<dbReference type="HOGENOM" id="CLU_056887_2_0_6"/>
<dbReference type="Proteomes" id="UP000007067">
    <property type="component" value="Chromosome"/>
</dbReference>
<dbReference type="GO" id="GO:0005737">
    <property type="term" value="C:cytoplasm"/>
    <property type="evidence" value="ECO:0007669"/>
    <property type="project" value="UniProtKB-SubCell"/>
</dbReference>
<dbReference type="GO" id="GO:0097163">
    <property type="term" value="F:sulfur carrier activity"/>
    <property type="evidence" value="ECO:0007669"/>
    <property type="project" value="UniProtKB-UniRule"/>
</dbReference>
<dbReference type="GO" id="GO:0016783">
    <property type="term" value="F:sulfurtransferase activity"/>
    <property type="evidence" value="ECO:0007669"/>
    <property type="project" value="InterPro"/>
</dbReference>
<dbReference type="GO" id="GO:0006777">
    <property type="term" value="P:Mo-molybdopterin cofactor biosynthetic process"/>
    <property type="evidence" value="ECO:0007669"/>
    <property type="project" value="UniProtKB-UniRule"/>
</dbReference>
<dbReference type="FunFam" id="3.10.20.10:FF:000003">
    <property type="entry name" value="Sulfur carrier protein FdhD"/>
    <property type="match status" value="1"/>
</dbReference>
<dbReference type="FunFam" id="3.40.140.10:FF:000027">
    <property type="entry name" value="Sulfur carrier protein FdhD"/>
    <property type="match status" value="1"/>
</dbReference>
<dbReference type="Gene3D" id="3.10.20.10">
    <property type="match status" value="1"/>
</dbReference>
<dbReference type="Gene3D" id="3.40.140.10">
    <property type="entry name" value="Cytidine Deaminase, domain 2"/>
    <property type="match status" value="1"/>
</dbReference>
<dbReference type="HAMAP" id="MF_00187">
    <property type="entry name" value="FdhD"/>
    <property type="match status" value="1"/>
</dbReference>
<dbReference type="InterPro" id="IPR016193">
    <property type="entry name" value="Cytidine_deaminase-like"/>
</dbReference>
<dbReference type="InterPro" id="IPR003786">
    <property type="entry name" value="FdhD"/>
</dbReference>
<dbReference type="NCBIfam" id="TIGR00129">
    <property type="entry name" value="fdhD_narQ"/>
    <property type="match status" value="1"/>
</dbReference>
<dbReference type="PANTHER" id="PTHR30592">
    <property type="entry name" value="FORMATE DEHYDROGENASE"/>
    <property type="match status" value="1"/>
</dbReference>
<dbReference type="PANTHER" id="PTHR30592:SF1">
    <property type="entry name" value="SULFUR CARRIER PROTEIN FDHD"/>
    <property type="match status" value="1"/>
</dbReference>
<dbReference type="Pfam" id="PF02634">
    <property type="entry name" value="FdhD-NarQ"/>
    <property type="match status" value="1"/>
</dbReference>
<dbReference type="PIRSF" id="PIRSF015626">
    <property type="entry name" value="FdhD"/>
    <property type="match status" value="1"/>
</dbReference>
<dbReference type="SUPFAM" id="SSF53927">
    <property type="entry name" value="Cytidine deaminase-like"/>
    <property type="match status" value="1"/>
</dbReference>
<gene>
    <name evidence="1" type="primary">fdhD</name>
    <name type="ordered locus">SBO_3909</name>
</gene>
<name>FDHD_SHIBS</name>
<feature type="chain" id="PRO_1000020818" description="Sulfur carrier protein FdhD">
    <location>
        <begin position="1"/>
        <end position="277"/>
    </location>
</feature>
<feature type="active site" description="Cysteine persulfide intermediate" evidence="1">
    <location>
        <position position="121"/>
    </location>
</feature>
<feature type="binding site" evidence="1">
    <location>
        <begin position="260"/>
        <end position="265"/>
    </location>
    <ligand>
        <name>Mo-bis(molybdopterin guanine dinucleotide)</name>
        <dbReference type="ChEBI" id="CHEBI:60539"/>
    </ligand>
</feature>
<keyword id="KW-0963">Cytoplasm</keyword>
<keyword id="KW-0501">Molybdenum cofactor biosynthesis</keyword>
<sequence>MKKTQRKEIENVTNITGVRQIELWRRDDLQHPRLDEVAEEVPVALVYNGISHVVMMASPKDLEYFALGFSLSEGIIESPRDIFGMDVVPSCNGLEVQIELSSRRFMGLKERRRALAGRTGCGVCGVEQLNDIGKPVQPLPFTQTFDLNKLDDALRHLNDFQPVGQLTGCTHAAAWMLPSGELVGGHEDVGRHVALDKLLGRRSQEGESWQQGAVLVSSRASYEMVQKSAMCGVEILFAVSAATTLAVEVAERCNLTLVGFCKPGRATVYTHPQRLSN</sequence>
<evidence type="ECO:0000255" key="1">
    <source>
        <dbReference type="HAMAP-Rule" id="MF_00187"/>
    </source>
</evidence>
<protein>
    <recommendedName>
        <fullName evidence="1">Sulfur carrier protein FdhD</fullName>
    </recommendedName>
</protein>
<reference key="1">
    <citation type="journal article" date="2005" name="Nucleic Acids Res.">
        <title>Genome dynamics and diversity of Shigella species, the etiologic agents of bacillary dysentery.</title>
        <authorList>
            <person name="Yang F."/>
            <person name="Yang J."/>
            <person name="Zhang X."/>
            <person name="Chen L."/>
            <person name="Jiang Y."/>
            <person name="Yan Y."/>
            <person name="Tang X."/>
            <person name="Wang J."/>
            <person name="Xiong Z."/>
            <person name="Dong J."/>
            <person name="Xue Y."/>
            <person name="Zhu Y."/>
            <person name="Xu X."/>
            <person name="Sun L."/>
            <person name="Chen S."/>
            <person name="Nie H."/>
            <person name="Peng J."/>
            <person name="Xu J."/>
            <person name="Wang Y."/>
            <person name="Yuan Z."/>
            <person name="Wen Y."/>
            <person name="Yao Z."/>
            <person name="Shen Y."/>
            <person name="Qiang B."/>
            <person name="Hou Y."/>
            <person name="Yu J."/>
            <person name="Jin Q."/>
        </authorList>
    </citation>
    <scope>NUCLEOTIDE SEQUENCE [LARGE SCALE GENOMIC DNA]</scope>
    <source>
        <strain>Sb227</strain>
    </source>
</reference>
<accession>Q31U98</accession>